<accession>B8E0J0</accession>
<gene>
    <name evidence="1" type="primary">rpsR</name>
    <name type="ordered locus">Dtur_1361</name>
</gene>
<feature type="chain" id="PRO_1000125799" description="Small ribosomal subunit protein bS18">
    <location>
        <begin position="1"/>
        <end position="84"/>
    </location>
</feature>
<reference key="1">
    <citation type="journal article" date="2016" name="Front. Microbiol.">
        <title>The complete genome sequence of hyperthermophile Dictyoglomus turgidum DSM 6724 reveals a specialized carbohydrate fermentor.</title>
        <authorList>
            <person name="Brumm P.J."/>
            <person name="Gowda K."/>
            <person name="Robb F.T."/>
            <person name="Mead D.A."/>
        </authorList>
    </citation>
    <scope>NUCLEOTIDE SEQUENCE [LARGE SCALE GENOMIC DNA]</scope>
    <source>
        <strain>DSM 6724 / Z-1310</strain>
    </source>
</reference>
<organism>
    <name type="scientific">Dictyoglomus turgidum (strain DSM 6724 / Z-1310)</name>
    <dbReference type="NCBI Taxonomy" id="515635"/>
    <lineage>
        <taxon>Bacteria</taxon>
        <taxon>Pseudomonadati</taxon>
        <taxon>Dictyoglomota</taxon>
        <taxon>Dictyoglomia</taxon>
        <taxon>Dictyoglomales</taxon>
        <taxon>Dictyoglomaceae</taxon>
        <taxon>Dictyoglomus</taxon>
    </lineage>
</organism>
<evidence type="ECO:0000255" key="1">
    <source>
        <dbReference type="HAMAP-Rule" id="MF_00270"/>
    </source>
</evidence>
<evidence type="ECO:0000305" key="2"/>
<name>RS18_DICTD</name>
<comment type="function">
    <text evidence="1">Binds as a heterodimer with protein bS6 to the central domain of the 16S rRNA, where it helps stabilize the platform of the 30S subunit.</text>
</comment>
<comment type="subunit">
    <text evidence="1">Part of the 30S ribosomal subunit. Forms a tight heterodimer with protein bS6.</text>
</comment>
<comment type="similarity">
    <text evidence="1">Belongs to the bacterial ribosomal protein bS18 family.</text>
</comment>
<keyword id="KW-1185">Reference proteome</keyword>
<keyword id="KW-0687">Ribonucleoprotein</keyword>
<keyword id="KW-0689">Ribosomal protein</keyword>
<keyword id="KW-0694">RNA-binding</keyword>
<keyword id="KW-0699">rRNA-binding</keyword>
<protein>
    <recommendedName>
        <fullName evidence="1">Small ribosomal subunit protein bS18</fullName>
    </recommendedName>
    <alternativeName>
        <fullName evidence="2">30S ribosomal protein S18</fullName>
    </alternativeName>
</protein>
<proteinExistence type="inferred from homology"/>
<sequence length="84" mass="9908">MSNEKASTKAPKFAYPSKKKYCIFCSEKIDYIDYKNVERLKRFMTEKGKIIPRRISGNCARHQRQLSTAIKRARYMALLPYVVK</sequence>
<dbReference type="EMBL" id="CP001251">
    <property type="protein sequence ID" value="ACK42635.1"/>
    <property type="molecule type" value="Genomic_DNA"/>
</dbReference>
<dbReference type="RefSeq" id="WP_012583715.1">
    <property type="nucleotide sequence ID" value="NC_011661.1"/>
</dbReference>
<dbReference type="RefSeq" id="YP_002353249.1">
    <property type="nucleotide sequence ID" value="NC_011661.1"/>
</dbReference>
<dbReference type="SMR" id="B8E0J0"/>
<dbReference type="FunCoup" id="B8E0J0">
    <property type="interactions" value="379"/>
</dbReference>
<dbReference type="STRING" id="515635.Dtur_1361"/>
<dbReference type="EnsemblBacteria" id="ACK42635">
    <property type="protein sequence ID" value="ACK42635"/>
    <property type="gene ID" value="Dtur_1361"/>
</dbReference>
<dbReference type="KEGG" id="dtu:Dtur_1361"/>
<dbReference type="PATRIC" id="fig|515635.4.peg.1406"/>
<dbReference type="eggNOG" id="COG0238">
    <property type="taxonomic scope" value="Bacteria"/>
</dbReference>
<dbReference type="HOGENOM" id="CLU_148710_0_3_0"/>
<dbReference type="InParanoid" id="B8E0J0"/>
<dbReference type="OrthoDB" id="9812008at2"/>
<dbReference type="Proteomes" id="UP000007719">
    <property type="component" value="Chromosome"/>
</dbReference>
<dbReference type="GO" id="GO:0022627">
    <property type="term" value="C:cytosolic small ribosomal subunit"/>
    <property type="evidence" value="ECO:0000318"/>
    <property type="project" value="GO_Central"/>
</dbReference>
<dbReference type="GO" id="GO:0070181">
    <property type="term" value="F:small ribosomal subunit rRNA binding"/>
    <property type="evidence" value="ECO:0000318"/>
    <property type="project" value="GO_Central"/>
</dbReference>
<dbReference type="GO" id="GO:0003735">
    <property type="term" value="F:structural constituent of ribosome"/>
    <property type="evidence" value="ECO:0000318"/>
    <property type="project" value="GO_Central"/>
</dbReference>
<dbReference type="GO" id="GO:0006412">
    <property type="term" value="P:translation"/>
    <property type="evidence" value="ECO:0000318"/>
    <property type="project" value="GO_Central"/>
</dbReference>
<dbReference type="FunFam" id="4.10.640.10:FF:000003">
    <property type="entry name" value="30S ribosomal protein S18"/>
    <property type="match status" value="1"/>
</dbReference>
<dbReference type="Gene3D" id="4.10.640.10">
    <property type="entry name" value="Ribosomal protein S18"/>
    <property type="match status" value="1"/>
</dbReference>
<dbReference type="HAMAP" id="MF_00270">
    <property type="entry name" value="Ribosomal_bS18"/>
    <property type="match status" value="1"/>
</dbReference>
<dbReference type="InterPro" id="IPR001648">
    <property type="entry name" value="Ribosomal_bS18"/>
</dbReference>
<dbReference type="InterPro" id="IPR018275">
    <property type="entry name" value="Ribosomal_bS18_CS"/>
</dbReference>
<dbReference type="InterPro" id="IPR036870">
    <property type="entry name" value="Ribosomal_bS18_sf"/>
</dbReference>
<dbReference type="NCBIfam" id="TIGR00165">
    <property type="entry name" value="S18"/>
    <property type="match status" value="1"/>
</dbReference>
<dbReference type="PANTHER" id="PTHR13479">
    <property type="entry name" value="30S RIBOSOMAL PROTEIN S18"/>
    <property type="match status" value="1"/>
</dbReference>
<dbReference type="PANTHER" id="PTHR13479:SF40">
    <property type="entry name" value="SMALL RIBOSOMAL SUBUNIT PROTEIN BS18M"/>
    <property type="match status" value="1"/>
</dbReference>
<dbReference type="Pfam" id="PF01084">
    <property type="entry name" value="Ribosomal_S18"/>
    <property type="match status" value="1"/>
</dbReference>
<dbReference type="PRINTS" id="PR00974">
    <property type="entry name" value="RIBOSOMALS18"/>
</dbReference>
<dbReference type="SUPFAM" id="SSF46911">
    <property type="entry name" value="Ribosomal protein S18"/>
    <property type="match status" value="1"/>
</dbReference>
<dbReference type="PROSITE" id="PS00057">
    <property type="entry name" value="RIBOSOMAL_S18"/>
    <property type="match status" value="1"/>
</dbReference>